<dbReference type="EMBL" id="AK032711">
    <property type="protein sequence ID" value="BAC27995.1"/>
    <property type="molecule type" value="mRNA"/>
</dbReference>
<dbReference type="EMBL" id="AK049979">
    <property type="protein sequence ID" value="BAC34016.1"/>
    <property type="molecule type" value="mRNA"/>
</dbReference>
<dbReference type="EMBL" id="AK082916">
    <property type="protein sequence ID" value="BAC38686.1"/>
    <property type="molecule type" value="mRNA"/>
</dbReference>
<dbReference type="EMBL" id="AK088569">
    <property type="protein sequence ID" value="BAC40428.1"/>
    <property type="status" value="ALT_INIT"/>
    <property type="molecule type" value="mRNA"/>
</dbReference>
<dbReference type="EMBL" id="AK147962">
    <property type="protein sequence ID" value="BAE28253.1"/>
    <property type="molecule type" value="mRNA"/>
</dbReference>
<dbReference type="EMBL" id="BC021367">
    <property type="protein sequence ID" value="AAH21367.1"/>
    <property type="molecule type" value="mRNA"/>
</dbReference>
<dbReference type="CCDS" id="CCDS40369.1">
    <molecule id="Q8VCA6-1"/>
</dbReference>
<dbReference type="CCDS" id="CCDS80890.1">
    <molecule id="Q8VCA6-2"/>
</dbReference>
<dbReference type="RefSeq" id="NP_001280726.1">
    <molecule id="Q8VCA6-2"/>
    <property type="nucleotide sequence ID" value="NM_001293797.2"/>
</dbReference>
<dbReference type="RefSeq" id="NP_001413587.1">
    <molecule id="Q8VCA6-2"/>
    <property type="nucleotide sequence ID" value="NM_001426658.1"/>
</dbReference>
<dbReference type="RefSeq" id="NP_001413588.1">
    <molecule id="Q8VCA6-2"/>
    <property type="nucleotide sequence ID" value="NM_001426659.1"/>
</dbReference>
<dbReference type="RefSeq" id="NP_663572.1">
    <molecule id="Q8VCA6-1"/>
    <property type="nucleotide sequence ID" value="NM_145597.5"/>
</dbReference>
<dbReference type="BioGRID" id="231519">
    <property type="interactions" value="1"/>
</dbReference>
<dbReference type="FunCoup" id="Q8VCA6">
    <property type="interactions" value="15"/>
</dbReference>
<dbReference type="STRING" id="10090.ENSMUSP00000002413"/>
<dbReference type="GlyCosmos" id="Q8VCA6">
    <property type="glycosylation" value="1 site, No reported glycans"/>
</dbReference>
<dbReference type="GlyGen" id="Q8VCA6">
    <property type="glycosylation" value="2 sites, 1 N-linked glycan (1 site)"/>
</dbReference>
<dbReference type="PhosphoSitePlus" id="Q8VCA6"/>
<dbReference type="PaxDb" id="10090-ENSMUSP00000002413"/>
<dbReference type="ProteomicsDB" id="263217">
    <molecule id="Q8VCA6-1"/>
</dbReference>
<dbReference type="ProteomicsDB" id="263218">
    <molecule id="Q8VCA6-2"/>
</dbReference>
<dbReference type="ProteomicsDB" id="263219">
    <molecule id="Q8VCA6-3"/>
</dbReference>
<dbReference type="Pumba" id="Q8VCA6"/>
<dbReference type="Antibodypedia" id="43982">
    <property type="antibodies" value="143 antibodies from 21 providers"/>
</dbReference>
<dbReference type="Ensembl" id="ENSMUST00000002413.15">
    <molecule id="Q8VCA6-1"/>
    <property type="protein sequence ID" value="ENSMUSP00000002413.9"/>
    <property type="gene ID" value="ENSMUSG00000002342.18"/>
</dbReference>
<dbReference type="Ensembl" id="ENSMUST00000182980.8">
    <molecule id="Q8VCA6-2"/>
    <property type="protein sequence ID" value="ENSMUSP00000138499.2"/>
    <property type="gene ID" value="ENSMUSG00000002342.18"/>
</dbReference>
<dbReference type="GeneID" id="234371"/>
<dbReference type="KEGG" id="mmu:234371"/>
<dbReference type="UCSC" id="uc009lzc.2">
    <molecule id="Q8VCA6-1"/>
    <property type="organism name" value="mouse"/>
</dbReference>
<dbReference type="UCSC" id="uc012geu.2">
    <molecule id="Q8VCA6-3"/>
    <property type="organism name" value="mouse"/>
</dbReference>
<dbReference type="AGR" id="MGI:2384577"/>
<dbReference type="CTD" id="54929"/>
<dbReference type="MGI" id="MGI:2384577">
    <property type="gene designation" value="Tmem161a"/>
</dbReference>
<dbReference type="VEuPathDB" id="HostDB:ENSMUSG00000002342"/>
<dbReference type="eggNOG" id="KOG3978">
    <property type="taxonomic scope" value="Eukaryota"/>
</dbReference>
<dbReference type="GeneTree" id="ENSGT00390000000672"/>
<dbReference type="HOGENOM" id="CLU_027277_0_0_1"/>
<dbReference type="InParanoid" id="Q8VCA6"/>
<dbReference type="OMA" id="VIVVLMW"/>
<dbReference type="OrthoDB" id="784140at2759"/>
<dbReference type="PhylomeDB" id="Q8VCA6"/>
<dbReference type="TreeFam" id="TF314570"/>
<dbReference type="BioGRID-ORCS" id="234371">
    <property type="hits" value="5 hits in 114 CRISPR screens"/>
</dbReference>
<dbReference type="PRO" id="PR:Q8VCA6"/>
<dbReference type="Proteomes" id="UP000000589">
    <property type="component" value="Chromosome 8"/>
</dbReference>
<dbReference type="RNAct" id="Q8VCA6">
    <property type="molecule type" value="protein"/>
</dbReference>
<dbReference type="Bgee" id="ENSMUSG00000002342">
    <property type="expression patterns" value="Expressed in interventricular septum and 248 other cell types or tissues"/>
</dbReference>
<dbReference type="ExpressionAtlas" id="Q8VCA6">
    <property type="expression patterns" value="baseline and differential"/>
</dbReference>
<dbReference type="GO" id="GO:0016020">
    <property type="term" value="C:membrane"/>
    <property type="evidence" value="ECO:0007669"/>
    <property type="project" value="UniProtKB-SubCell"/>
</dbReference>
<dbReference type="GO" id="GO:0034599">
    <property type="term" value="P:cellular response to oxidative stress"/>
    <property type="evidence" value="ECO:0007669"/>
    <property type="project" value="Ensembl"/>
</dbReference>
<dbReference type="GO" id="GO:0034644">
    <property type="term" value="P:cellular response to UV"/>
    <property type="evidence" value="ECO:0007669"/>
    <property type="project" value="Ensembl"/>
</dbReference>
<dbReference type="GO" id="GO:1902230">
    <property type="term" value="P:negative regulation of intrinsic apoptotic signaling pathway in response to DNA damage"/>
    <property type="evidence" value="ECO:0007669"/>
    <property type="project" value="Ensembl"/>
</dbReference>
<dbReference type="GO" id="GO:0045739">
    <property type="term" value="P:positive regulation of DNA repair"/>
    <property type="evidence" value="ECO:0007669"/>
    <property type="project" value="Ensembl"/>
</dbReference>
<dbReference type="GO" id="GO:0032526">
    <property type="term" value="P:response to retinoic acid"/>
    <property type="evidence" value="ECO:0007669"/>
    <property type="project" value="Ensembl"/>
</dbReference>
<dbReference type="InterPro" id="IPR019395">
    <property type="entry name" value="Transmembrane_161A/B"/>
</dbReference>
<dbReference type="PANTHER" id="PTHR13624">
    <property type="entry name" value="RE42071P"/>
    <property type="match status" value="1"/>
</dbReference>
<dbReference type="PANTHER" id="PTHR13624:SF4">
    <property type="entry name" value="TRANSMEMBRANE PROTEIN 161A"/>
    <property type="match status" value="1"/>
</dbReference>
<dbReference type="Pfam" id="PF10268">
    <property type="entry name" value="Tmemb_161AB"/>
    <property type="match status" value="1"/>
</dbReference>
<reference key="1">
    <citation type="journal article" date="2005" name="Science">
        <title>The transcriptional landscape of the mammalian genome.</title>
        <authorList>
            <person name="Carninci P."/>
            <person name="Kasukawa T."/>
            <person name="Katayama S."/>
            <person name="Gough J."/>
            <person name="Frith M.C."/>
            <person name="Maeda N."/>
            <person name="Oyama R."/>
            <person name="Ravasi T."/>
            <person name="Lenhard B."/>
            <person name="Wells C."/>
            <person name="Kodzius R."/>
            <person name="Shimokawa K."/>
            <person name="Bajic V.B."/>
            <person name="Brenner S.E."/>
            <person name="Batalov S."/>
            <person name="Forrest A.R."/>
            <person name="Zavolan M."/>
            <person name="Davis M.J."/>
            <person name="Wilming L.G."/>
            <person name="Aidinis V."/>
            <person name="Allen J.E."/>
            <person name="Ambesi-Impiombato A."/>
            <person name="Apweiler R."/>
            <person name="Aturaliya R.N."/>
            <person name="Bailey T.L."/>
            <person name="Bansal M."/>
            <person name="Baxter L."/>
            <person name="Beisel K.W."/>
            <person name="Bersano T."/>
            <person name="Bono H."/>
            <person name="Chalk A.M."/>
            <person name="Chiu K.P."/>
            <person name="Choudhary V."/>
            <person name="Christoffels A."/>
            <person name="Clutterbuck D.R."/>
            <person name="Crowe M.L."/>
            <person name="Dalla E."/>
            <person name="Dalrymple B.P."/>
            <person name="de Bono B."/>
            <person name="Della Gatta G."/>
            <person name="di Bernardo D."/>
            <person name="Down T."/>
            <person name="Engstrom P."/>
            <person name="Fagiolini M."/>
            <person name="Faulkner G."/>
            <person name="Fletcher C.F."/>
            <person name="Fukushima T."/>
            <person name="Furuno M."/>
            <person name="Futaki S."/>
            <person name="Gariboldi M."/>
            <person name="Georgii-Hemming P."/>
            <person name="Gingeras T.R."/>
            <person name="Gojobori T."/>
            <person name="Green R.E."/>
            <person name="Gustincich S."/>
            <person name="Harbers M."/>
            <person name="Hayashi Y."/>
            <person name="Hensch T.K."/>
            <person name="Hirokawa N."/>
            <person name="Hill D."/>
            <person name="Huminiecki L."/>
            <person name="Iacono M."/>
            <person name="Ikeo K."/>
            <person name="Iwama A."/>
            <person name="Ishikawa T."/>
            <person name="Jakt M."/>
            <person name="Kanapin A."/>
            <person name="Katoh M."/>
            <person name="Kawasawa Y."/>
            <person name="Kelso J."/>
            <person name="Kitamura H."/>
            <person name="Kitano H."/>
            <person name="Kollias G."/>
            <person name="Krishnan S.P."/>
            <person name="Kruger A."/>
            <person name="Kummerfeld S.K."/>
            <person name="Kurochkin I.V."/>
            <person name="Lareau L.F."/>
            <person name="Lazarevic D."/>
            <person name="Lipovich L."/>
            <person name="Liu J."/>
            <person name="Liuni S."/>
            <person name="McWilliam S."/>
            <person name="Madan Babu M."/>
            <person name="Madera M."/>
            <person name="Marchionni L."/>
            <person name="Matsuda H."/>
            <person name="Matsuzawa S."/>
            <person name="Miki H."/>
            <person name="Mignone F."/>
            <person name="Miyake S."/>
            <person name="Morris K."/>
            <person name="Mottagui-Tabar S."/>
            <person name="Mulder N."/>
            <person name="Nakano N."/>
            <person name="Nakauchi H."/>
            <person name="Ng P."/>
            <person name="Nilsson R."/>
            <person name="Nishiguchi S."/>
            <person name="Nishikawa S."/>
            <person name="Nori F."/>
            <person name="Ohara O."/>
            <person name="Okazaki Y."/>
            <person name="Orlando V."/>
            <person name="Pang K.C."/>
            <person name="Pavan W.J."/>
            <person name="Pavesi G."/>
            <person name="Pesole G."/>
            <person name="Petrovsky N."/>
            <person name="Piazza S."/>
            <person name="Reed J."/>
            <person name="Reid J.F."/>
            <person name="Ring B.Z."/>
            <person name="Ringwald M."/>
            <person name="Rost B."/>
            <person name="Ruan Y."/>
            <person name="Salzberg S.L."/>
            <person name="Sandelin A."/>
            <person name="Schneider C."/>
            <person name="Schoenbach C."/>
            <person name="Sekiguchi K."/>
            <person name="Semple C.A."/>
            <person name="Seno S."/>
            <person name="Sessa L."/>
            <person name="Sheng Y."/>
            <person name="Shibata Y."/>
            <person name="Shimada H."/>
            <person name="Shimada K."/>
            <person name="Silva D."/>
            <person name="Sinclair B."/>
            <person name="Sperling S."/>
            <person name="Stupka E."/>
            <person name="Sugiura K."/>
            <person name="Sultana R."/>
            <person name="Takenaka Y."/>
            <person name="Taki K."/>
            <person name="Tammoja K."/>
            <person name="Tan S.L."/>
            <person name="Tang S."/>
            <person name="Taylor M.S."/>
            <person name="Tegner J."/>
            <person name="Teichmann S.A."/>
            <person name="Ueda H.R."/>
            <person name="van Nimwegen E."/>
            <person name="Verardo R."/>
            <person name="Wei C.L."/>
            <person name="Yagi K."/>
            <person name="Yamanishi H."/>
            <person name="Zabarovsky E."/>
            <person name="Zhu S."/>
            <person name="Zimmer A."/>
            <person name="Hide W."/>
            <person name="Bult C."/>
            <person name="Grimmond S.M."/>
            <person name="Teasdale R.D."/>
            <person name="Liu E.T."/>
            <person name="Brusic V."/>
            <person name="Quackenbush J."/>
            <person name="Wahlestedt C."/>
            <person name="Mattick J.S."/>
            <person name="Hume D.A."/>
            <person name="Kai C."/>
            <person name="Sasaki D."/>
            <person name="Tomaru Y."/>
            <person name="Fukuda S."/>
            <person name="Kanamori-Katayama M."/>
            <person name="Suzuki M."/>
            <person name="Aoki J."/>
            <person name="Arakawa T."/>
            <person name="Iida J."/>
            <person name="Imamura K."/>
            <person name="Itoh M."/>
            <person name="Kato T."/>
            <person name="Kawaji H."/>
            <person name="Kawagashira N."/>
            <person name="Kawashima T."/>
            <person name="Kojima M."/>
            <person name="Kondo S."/>
            <person name="Konno H."/>
            <person name="Nakano K."/>
            <person name="Ninomiya N."/>
            <person name="Nishio T."/>
            <person name="Okada M."/>
            <person name="Plessy C."/>
            <person name="Shibata K."/>
            <person name="Shiraki T."/>
            <person name="Suzuki S."/>
            <person name="Tagami M."/>
            <person name="Waki K."/>
            <person name="Watahiki A."/>
            <person name="Okamura-Oho Y."/>
            <person name="Suzuki H."/>
            <person name="Kawai J."/>
            <person name="Hayashizaki Y."/>
        </authorList>
    </citation>
    <scope>NUCLEOTIDE SEQUENCE [LARGE SCALE MRNA] (ISOFORMS 1; 2 AND 3)</scope>
    <source>
        <strain>C57BL/6J</strain>
        <strain>NOD</strain>
        <tissue>Embryo</tissue>
        <tissue>Hippocampus</tissue>
        <tissue>Thymus</tissue>
    </source>
</reference>
<reference key="2">
    <citation type="journal article" date="2004" name="Genome Res.">
        <title>The status, quality, and expansion of the NIH full-length cDNA project: the Mammalian Gene Collection (MGC).</title>
        <authorList>
            <consortium name="The MGC Project Team"/>
        </authorList>
    </citation>
    <scope>NUCLEOTIDE SEQUENCE [LARGE SCALE MRNA] (ISOFORM 1)</scope>
    <source>
        <tissue>Mammary tumor</tissue>
    </source>
</reference>
<gene>
    <name type="primary">Tmem161a</name>
</gene>
<keyword id="KW-0025">Alternative splicing</keyword>
<keyword id="KW-0325">Glycoprotein</keyword>
<keyword id="KW-0472">Membrane</keyword>
<keyword id="KW-1185">Reference proteome</keyword>
<keyword id="KW-0732">Signal</keyword>
<keyword id="KW-0812">Transmembrane</keyword>
<keyword id="KW-1133">Transmembrane helix</keyword>
<protein>
    <recommendedName>
        <fullName>Transmembrane protein 161A</fullName>
    </recommendedName>
</protein>
<proteinExistence type="evidence at transcript level"/>
<comment type="function">
    <text evidence="1">May play a role in protection against oxidative stress. Overexpression leads to reduced levels of oxidant-induced DNA damage and apoptosis (By similarity).</text>
</comment>
<comment type="subcellular location">
    <subcellularLocation>
        <location evidence="4">Membrane</location>
        <topology evidence="4">Multi-pass membrane protein</topology>
    </subcellularLocation>
</comment>
<comment type="alternative products">
    <event type="alternative splicing"/>
    <isoform>
        <id>Q8VCA6-1</id>
        <name>1</name>
        <sequence type="displayed"/>
    </isoform>
    <isoform>
        <id>Q8VCA6-2</id>
        <name>2</name>
        <sequence type="described" ref="VSP_025644"/>
    </isoform>
    <isoform>
        <id>Q8VCA6-3</id>
        <name>3</name>
        <sequence type="described" ref="VSP_025643 VSP_025645"/>
    </isoform>
</comment>
<comment type="similarity">
    <text evidence="4">Belongs to the TMEM161 family.</text>
</comment>
<comment type="sequence caution" evidence="4">
    <conflict type="erroneous initiation">
        <sequence resource="EMBL-CDS" id="BAC40428"/>
    </conflict>
</comment>
<accession>Q8VCA6</accession>
<accession>Q8BNL7</accession>
<accession>Q8BSL1</accession>
<accession>Q8C2I8</accession>
<sequence>MAVLGVQLVVTLFTATLMHRLAPHCSFARWLLCNGSLFRYIHPSEEELRALSGKLRPRVRKERWANGLHDEKPLSVPRDAHFQLQTCPLTAVDALVLRFFLEYQWFVDFAVYSVGVYLFTEAYYFVLGPVQETNIAVFWCLLTLAFSLKVFLMVTRLYFSTKEGGERSVCLSFAFLFLLLAMLVQVVREETLELGLEPGLASMTQHLEPILKKQDWDWTLPVIKLAIRLGLAVLGSLLGAFLIFPGLRLAQTHQDALTLSADRPLLQLLLHTSFLSPLCTLWLWTKPVARDFLYQAPTRNMTFSVPSEGAFDSLRLWVLVALCLLRLAVTRPHLQAYLCLAKARVEQLRKEAGRIEAREIQQRVVRVYCYVTVVSLQYLTPLILTLHCTLLLKTLGGYSWALSSTPPPLAPSQPSEALIPVDPAGDEAQQTAAQVAGILGGLLTPLFLRGMLAYIIWWTAACQLLSSLFGLYFHQHLAAS</sequence>
<organism>
    <name type="scientific">Mus musculus</name>
    <name type="common">Mouse</name>
    <dbReference type="NCBI Taxonomy" id="10090"/>
    <lineage>
        <taxon>Eukaryota</taxon>
        <taxon>Metazoa</taxon>
        <taxon>Chordata</taxon>
        <taxon>Craniata</taxon>
        <taxon>Vertebrata</taxon>
        <taxon>Euteleostomi</taxon>
        <taxon>Mammalia</taxon>
        <taxon>Eutheria</taxon>
        <taxon>Euarchontoglires</taxon>
        <taxon>Glires</taxon>
        <taxon>Rodentia</taxon>
        <taxon>Myomorpha</taxon>
        <taxon>Muroidea</taxon>
        <taxon>Muridae</taxon>
        <taxon>Murinae</taxon>
        <taxon>Mus</taxon>
        <taxon>Mus</taxon>
    </lineage>
</organism>
<feature type="signal peptide" evidence="2">
    <location>
        <begin position="1"/>
        <end position="28"/>
    </location>
</feature>
<feature type="chain" id="PRO_0000288085" description="Transmembrane protein 161A">
    <location>
        <begin position="29"/>
        <end position="480"/>
    </location>
</feature>
<feature type="topological domain" description="Extracellular" evidence="2">
    <location>
        <begin position="29"/>
        <end position="98"/>
    </location>
</feature>
<feature type="transmembrane region" description="Helical" evidence="2">
    <location>
        <begin position="99"/>
        <end position="119"/>
    </location>
</feature>
<feature type="topological domain" description="Cytoplasmic" evidence="2">
    <location>
        <begin position="120"/>
        <end position="134"/>
    </location>
</feature>
<feature type="transmembrane region" description="Helical" evidence="2">
    <location>
        <begin position="135"/>
        <end position="155"/>
    </location>
</feature>
<feature type="topological domain" description="Extracellular" evidence="2">
    <location>
        <begin position="156"/>
        <end position="166"/>
    </location>
</feature>
<feature type="transmembrane region" description="Helical" evidence="2">
    <location>
        <begin position="167"/>
        <end position="187"/>
    </location>
</feature>
<feature type="topological domain" description="Cytoplasmic" evidence="2">
    <location>
        <begin position="188"/>
        <end position="224"/>
    </location>
</feature>
<feature type="transmembrane region" description="Helical" evidence="2">
    <location>
        <begin position="225"/>
        <end position="245"/>
    </location>
</feature>
<feature type="topological domain" description="Extracellular" evidence="2">
    <location>
        <begin position="246"/>
        <end position="263"/>
    </location>
</feature>
<feature type="transmembrane region" description="Helical" evidence="2">
    <location>
        <begin position="264"/>
        <end position="284"/>
    </location>
</feature>
<feature type="topological domain" description="Cytoplasmic" evidence="2">
    <location>
        <begin position="285"/>
        <end position="304"/>
    </location>
</feature>
<feature type="transmembrane region" description="Helical" evidence="2">
    <location>
        <begin position="305"/>
        <end position="325"/>
    </location>
</feature>
<feature type="topological domain" description="Extracellular" evidence="2">
    <location>
        <begin position="326"/>
        <end position="370"/>
    </location>
</feature>
<feature type="transmembrane region" description="Helical" evidence="2">
    <location>
        <begin position="371"/>
        <end position="391"/>
    </location>
</feature>
<feature type="topological domain" description="Cytoplasmic" evidence="2">
    <location>
        <begin position="392"/>
        <end position="450"/>
    </location>
</feature>
<feature type="transmembrane region" description="Helical" evidence="2">
    <location>
        <begin position="451"/>
        <end position="473"/>
    </location>
</feature>
<feature type="topological domain" description="Extracellular" evidence="2">
    <location>
        <begin position="474"/>
        <end position="480"/>
    </location>
</feature>
<feature type="glycosylation site" description="N-linked (GlcNAc...) asparagine" evidence="2">
    <location>
        <position position="34"/>
    </location>
</feature>
<feature type="splice variant" id="VSP_025643" description="In isoform 3." evidence="3">
    <location>
        <begin position="1"/>
        <end position="196"/>
    </location>
</feature>
<feature type="splice variant" id="VSP_025644" description="In isoform 2." evidence="3">
    <location>
        <begin position="1"/>
        <end position="152"/>
    </location>
</feature>
<feature type="splice variant" id="VSP_025645" description="In isoform 3." evidence="3">
    <original>EP</original>
    <variation>MA</variation>
    <location>
        <begin position="197"/>
        <end position="198"/>
    </location>
</feature>
<feature type="sequence conflict" description="In Ref. 1; BAC27995." evidence="4" ref="1">
    <original>K</original>
    <variation>E</variation>
    <location>
        <position position="342"/>
    </location>
</feature>
<feature type="sequence conflict" description="In Ref. 1; BAC40428." evidence="4" ref="1">
    <original>P</original>
    <variation>L</variation>
    <location>
        <position position="423"/>
    </location>
</feature>
<feature type="sequence conflict" description="In Ref. 1; BAC40428." evidence="4" ref="1">
    <original>L</original>
    <variation>V</variation>
    <location>
        <position position="439"/>
    </location>
</feature>
<feature type="sequence conflict" description="In Ref. 1; BAC40428." evidence="4" ref="1">
    <original>L</original>
    <variation>M</variation>
    <location>
        <position position="464"/>
    </location>
</feature>
<name>T161A_MOUSE</name>
<evidence type="ECO:0000250" key="1"/>
<evidence type="ECO:0000255" key="2"/>
<evidence type="ECO:0000303" key="3">
    <source>
    </source>
</evidence>
<evidence type="ECO:0000305" key="4"/>